<keyword id="KW-0030">Aminoacyl-tRNA synthetase</keyword>
<keyword id="KW-0067">ATP-binding</keyword>
<keyword id="KW-0963">Cytoplasm</keyword>
<keyword id="KW-0436">Ligase</keyword>
<keyword id="KW-0479">Metal-binding</keyword>
<keyword id="KW-0547">Nucleotide-binding</keyword>
<keyword id="KW-0648">Protein biosynthesis</keyword>
<keyword id="KW-1185">Reference proteome</keyword>
<keyword id="KW-0862">Zinc</keyword>
<accession>Q6LT67</accession>
<gene>
    <name evidence="1" type="primary">cysS1</name>
    <name type="ordered locus">PBPRA1098</name>
</gene>
<feature type="chain" id="PRO_0000159453" description="Cysteine--tRNA ligase 1">
    <location>
        <begin position="1"/>
        <end position="464"/>
    </location>
</feature>
<feature type="short sequence motif" description="'HIGH' region">
    <location>
        <begin position="30"/>
        <end position="40"/>
    </location>
</feature>
<feature type="short sequence motif" description="'KMSKS' region">
    <location>
        <begin position="266"/>
        <end position="270"/>
    </location>
</feature>
<feature type="binding site" evidence="1">
    <location>
        <position position="28"/>
    </location>
    <ligand>
        <name>Zn(2+)</name>
        <dbReference type="ChEBI" id="CHEBI:29105"/>
    </ligand>
</feature>
<feature type="binding site" evidence="1">
    <location>
        <position position="209"/>
    </location>
    <ligand>
        <name>Zn(2+)</name>
        <dbReference type="ChEBI" id="CHEBI:29105"/>
    </ligand>
</feature>
<feature type="binding site" evidence="1">
    <location>
        <position position="234"/>
    </location>
    <ligand>
        <name>Zn(2+)</name>
        <dbReference type="ChEBI" id="CHEBI:29105"/>
    </ligand>
</feature>
<feature type="binding site" evidence="1">
    <location>
        <position position="238"/>
    </location>
    <ligand>
        <name>Zn(2+)</name>
        <dbReference type="ChEBI" id="CHEBI:29105"/>
    </ligand>
</feature>
<feature type="binding site" evidence="1">
    <location>
        <position position="269"/>
    </location>
    <ligand>
        <name>ATP</name>
        <dbReference type="ChEBI" id="CHEBI:30616"/>
    </ligand>
</feature>
<reference key="1">
    <citation type="journal article" date="2005" name="Science">
        <title>Life at depth: Photobacterium profundum genome sequence and expression analysis.</title>
        <authorList>
            <person name="Vezzi A."/>
            <person name="Campanaro S."/>
            <person name="D'Angelo M."/>
            <person name="Simonato F."/>
            <person name="Vitulo N."/>
            <person name="Lauro F.M."/>
            <person name="Cestaro A."/>
            <person name="Malacrida G."/>
            <person name="Simionati B."/>
            <person name="Cannata N."/>
            <person name="Romualdi C."/>
            <person name="Bartlett D.H."/>
            <person name="Valle G."/>
        </authorList>
    </citation>
    <scope>NUCLEOTIDE SEQUENCE [LARGE SCALE GENOMIC DNA]</scope>
    <source>
        <strain>ATCC BAA-1253 / SS9</strain>
    </source>
</reference>
<proteinExistence type="inferred from homology"/>
<name>SYC1_PHOPR</name>
<evidence type="ECO:0000255" key="1">
    <source>
        <dbReference type="HAMAP-Rule" id="MF_00041"/>
    </source>
</evidence>
<sequence>MLKIYNSLTKQKEEFKPIQPGKIGMYVCGVTIYDLCHIGHGRTFVSFDVVSRYLRYSGYDLTFVRNITDIDDKIIKRAAENGESCESLTERLIGEMHKDFDALGMKRPDIEPRATEFIAEIIILCERLIERGFAYVASNGDVMFEVSKFEEYGRLSRQDLDQLQAGARVDIDMAKRSPLDFVLWKMSKPGEPTWESPWGAGRPGWHIECSAMNSAILGDHFDIHGGGSDLQFPHHENEIAQSCCATGSQYVNTWMHSGMVMVDREKMSKSLGNFFTIRDVLAHYDAESVRYFLMSGHYRSQLNYSEDNLKQARSALERLYTSLRGLDLTAQAEGGEEFVTRFTASMNDDFNTPEAYSVLFDMAREINRLKADETIANNIVQASALGARLRELADILGLLSQDPEAFLQGGAGQDDVAEIETLVQQRLDARAAKDWAAADAARDKLLAMKIILEDGPQGTTWRRK</sequence>
<protein>
    <recommendedName>
        <fullName evidence="1">Cysteine--tRNA ligase 1</fullName>
        <ecNumber evidence="1">6.1.1.16</ecNumber>
    </recommendedName>
    <alternativeName>
        <fullName evidence="1">Cysteinyl-tRNA synthetase 1</fullName>
        <shortName evidence="1">CysRS 1</shortName>
    </alternativeName>
</protein>
<organism>
    <name type="scientific">Photobacterium profundum (strain SS9)</name>
    <dbReference type="NCBI Taxonomy" id="298386"/>
    <lineage>
        <taxon>Bacteria</taxon>
        <taxon>Pseudomonadati</taxon>
        <taxon>Pseudomonadota</taxon>
        <taxon>Gammaproteobacteria</taxon>
        <taxon>Vibrionales</taxon>
        <taxon>Vibrionaceae</taxon>
        <taxon>Photobacterium</taxon>
    </lineage>
</organism>
<comment type="catalytic activity">
    <reaction evidence="1">
        <text>tRNA(Cys) + L-cysteine + ATP = L-cysteinyl-tRNA(Cys) + AMP + diphosphate</text>
        <dbReference type="Rhea" id="RHEA:17773"/>
        <dbReference type="Rhea" id="RHEA-COMP:9661"/>
        <dbReference type="Rhea" id="RHEA-COMP:9679"/>
        <dbReference type="ChEBI" id="CHEBI:30616"/>
        <dbReference type="ChEBI" id="CHEBI:33019"/>
        <dbReference type="ChEBI" id="CHEBI:35235"/>
        <dbReference type="ChEBI" id="CHEBI:78442"/>
        <dbReference type="ChEBI" id="CHEBI:78517"/>
        <dbReference type="ChEBI" id="CHEBI:456215"/>
        <dbReference type="EC" id="6.1.1.16"/>
    </reaction>
</comment>
<comment type="cofactor">
    <cofactor evidence="1">
        <name>Zn(2+)</name>
        <dbReference type="ChEBI" id="CHEBI:29105"/>
    </cofactor>
    <text evidence="1">Binds 1 zinc ion per subunit.</text>
</comment>
<comment type="subunit">
    <text evidence="1">Monomer.</text>
</comment>
<comment type="subcellular location">
    <subcellularLocation>
        <location evidence="1">Cytoplasm</location>
    </subcellularLocation>
</comment>
<comment type="similarity">
    <text evidence="1">Belongs to the class-I aminoacyl-tRNA synthetase family.</text>
</comment>
<dbReference type="EC" id="6.1.1.16" evidence="1"/>
<dbReference type="EMBL" id="CR378666">
    <property type="protein sequence ID" value="CAG19509.1"/>
    <property type="molecule type" value="Genomic_DNA"/>
</dbReference>
<dbReference type="RefSeq" id="WP_011217842.1">
    <property type="nucleotide sequence ID" value="NC_006370.1"/>
</dbReference>
<dbReference type="SMR" id="Q6LT67"/>
<dbReference type="STRING" id="298386.PBPRA1098"/>
<dbReference type="KEGG" id="ppr:PBPRA1098"/>
<dbReference type="eggNOG" id="COG0215">
    <property type="taxonomic scope" value="Bacteria"/>
</dbReference>
<dbReference type="HOGENOM" id="CLU_013528_0_1_6"/>
<dbReference type="Proteomes" id="UP000000593">
    <property type="component" value="Chromosome 1"/>
</dbReference>
<dbReference type="GO" id="GO:0005829">
    <property type="term" value="C:cytosol"/>
    <property type="evidence" value="ECO:0007669"/>
    <property type="project" value="TreeGrafter"/>
</dbReference>
<dbReference type="GO" id="GO:0005524">
    <property type="term" value="F:ATP binding"/>
    <property type="evidence" value="ECO:0007669"/>
    <property type="project" value="UniProtKB-UniRule"/>
</dbReference>
<dbReference type="GO" id="GO:0004817">
    <property type="term" value="F:cysteine-tRNA ligase activity"/>
    <property type="evidence" value="ECO:0007669"/>
    <property type="project" value="UniProtKB-UniRule"/>
</dbReference>
<dbReference type="GO" id="GO:0008270">
    <property type="term" value="F:zinc ion binding"/>
    <property type="evidence" value="ECO:0007669"/>
    <property type="project" value="UniProtKB-UniRule"/>
</dbReference>
<dbReference type="GO" id="GO:0006423">
    <property type="term" value="P:cysteinyl-tRNA aminoacylation"/>
    <property type="evidence" value="ECO:0007669"/>
    <property type="project" value="UniProtKB-UniRule"/>
</dbReference>
<dbReference type="CDD" id="cd07963">
    <property type="entry name" value="Anticodon_Ia_Cys"/>
    <property type="match status" value="1"/>
</dbReference>
<dbReference type="CDD" id="cd00672">
    <property type="entry name" value="CysRS_core"/>
    <property type="match status" value="1"/>
</dbReference>
<dbReference type="FunFam" id="1.20.120.1910:FF:000001">
    <property type="entry name" value="Cysteine--tRNA ligase"/>
    <property type="match status" value="1"/>
</dbReference>
<dbReference type="FunFam" id="3.40.50.620:FF:000009">
    <property type="entry name" value="Cysteine--tRNA ligase"/>
    <property type="match status" value="1"/>
</dbReference>
<dbReference type="Gene3D" id="1.20.120.1910">
    <property type="entry name" value="Cysteine-tRNA ligase, C-terminal anti-codon recognition domain"/>
    <property type="match status" value="1"/>
</dbReference>
<dbReference type="Gene3D" id="3.40.50.620">
    <property type="entry name" value="HUPs"/>
    <property type="match status" value="1"/>
</dbReference>
<dbReference type="HAMAP" id="MF_00041">
    <property type="entry name" value="Cys_tRNA_synth"/>
    <property type="match status" value="1"/>
</dbReference>
<dbReference type="InterPro" id="IPR015803">
    <property type="entry name" value="Cys-tRNA-ligase"/>
</dbReference>
<dbReference type="InterPro" id="IPR015273">
    <property type="entry name" value="Cys-tRNA-synt_Ia_DALR"/>
</dbReference>
<dbReference type="InterPro" id="IPR024909">
    <property type="entry name" value="Cys-tRNA/MSH_ligase"/>
</dbReference>
<dbReference type="InterPro" id="IPR056411">
    <property type="entry name" value="CysS_C"/>
</dbReference>
<dbReference type="InterPro" id="IPR014729">
    <property type="entry name" value="Rossmann-like_a/b/a_fold"/>
</dbReference>
<dbReference type="InterPro" id="IPR032678">
    <property type="entry name" value="tRNA-synt_1_cat_dom"/>
</dbReference>
<dbReference type="InterPro" id="IPR009080">
    <property type="entry name" value="tRNAsynth_Ia_anticodon-bd"/>
</dbReference>
<dbReference type="NCBIfam" id="TIGR00435">
    <property type="entry name" value="cysS"/>
    <property type="match status" value="1"/>
</dbReference>
<dbReference type="PANTHER" id="PTHR10890:SF3">
    <property type="entry name" value="CYSTEINE--TRNA LIGASE, CYTOPLASMIC"/>
    <property type="match status" value="1"/>
</dbReference>
<dbReference type="PANTHER" id="PTHR10890">
    <property type="entry name" value="CYSTEINYL-TRNA SYNTHETASE"/>
    <property type="match status" value="1"/>
</dbReference>
<dbReference type="Pfam" id="PF23493">
    <property type="entry name" value="CysS_C"/>
    <property type="match status" value="1"/>
</dbReference>
<dbReference type="Pfam" id="PF09190">
    <property type="entry name" value="DALR_2"/>
    <property type="match status" value="1"/>
</dbReference>
<dbReference type="Pfam" id="PF01406">
    <property type="entry name" value="tRNA-synt_1e"/>
    <property type="match status" value="1"/>
</dbReference>
<dbReference type="PRINTS" id="PR00983">
    <property type="entry name" value="TRNASYNTHCYS"/>
</dbReference>
<dbReference type="SMART" id="SM00840">
    <property type="entry name" value="DALR_2"/>
    <property type="match status" value="1"/>
</dbReference>
<dbReference type="SUPFAM" id="SSF47323">
    <property type="entry name" value="Anticodon-binding domain of a subclass of class I aminoacyl-tRNA synthetases"/>
    <property type="match status" value="1"/>
</dbReference>
<dbReference type="SUPFAM" id="SSF52374">
    <property type="entry name" value="Nucleotidylyl transferase"/>
    <property type="match status" value="1"/>
</dbReference>